<protein>
    <recommendedName>
        <fullName evidence="1">ATP-dependent zinc metalloprotease FtsH</fullName>
        <ecNumber evidence="1">3.4.24.-</ecNumber>
    </recommendedName>
</protein>
<name>FTSH_CHLL3</name>
<reference key="1">
    <citation type="submission" date="2005-08" db="EMBL/GenBank/DDBJ databases">
        <title>Complete sequence of Pelodictyon luteolum DSM 273.</title>
        <authorList>
            <consortium name="US DOE Joint Genome Institute"/>
            <person name="Copeland A."/>
            <person name="Lucas S."/>
            <person name="Lapidus A."/>
            <person name="Barry K."/>
            <person name="Detter J.C."/>
            <person name="Glavina T."/>
            <person name="Hammon N."/>
            <person name="Israni S."/>
            <person name="Pitluck S."/>
            <person name="Bryant D."/>
            <person name="Schmutz J."/>
            <person name="Larimer F."/>
            <person name="Land M."/>
            <person name="Kyrpides N."/>
            <person name="Ivanova N."/>
            <person name="Richardson P."/>
        </authorList>
    </citation>
    <scope>NUCLEOTIDE SEQUENCE [LARGE SCALE GENOMIC DNA]</scope>
    <source>
        <strain>DSM 273 / BCRC 81028 / 2530</strain>
    </source>
</reference>
<gene>
    <name evidence="1" type="primary">ftsH</name>
    <name type="ordered locus">Plut_0078</name>
</gene>
<comment type="function">
    <text evidence="1">Acts as a processive, ATP-dependent zinc metallopeptidase for both cytoplasmic and membrane proteins. Plays a role in the quality control of integral membrane proteins.</text>
</comment>
<comment type="cofactor">
    <cofactor evidence="1">
        <name>Zn(2+)</name>
        <dbReference type="ChEBI" id="CHEBI:29105"/>
    </cofactor>
    <text evidence="1">Binds 1 zinc ion per subunit.</text>
</comment>
<comment type="subunit">
    <text evidence="1">Homohexamer.</text>
</comment>
<comment type="subcellular location">
    <subcellularLocation>
        <location evidence="1">Cell inner membrane</location>
        <topology evidence="1">Multi-pass membrane protein</topology>
        <orientation evidence="1">Cytoplasmic side</orientation>
    </subcellularLocation>
</comment>
<comment type="similarity">
    <text evidence="1">In the central section; belongs to the AAA ATPase family.</text>
</comment>
<comment type="similarity">
    <text evidence="1">In the C-terminal section; belongs to the peptidase M41 family.</text>
</comment>
<accession>Q3B6R3</accession>
<organism>
    <name type="scientific">Chlorobium luteolum (strain DSM 273 / BCRC 81028 / 2530)</name>
    <name type="common">Pelodictyon luteolum</name>
    <dbReference type="NCBI Taxonomy" id="319225"/>
    <lineage>
        <taxon>Bacteria</taxon>
        <taxon>Pseudomonadati</taxon>
        <taxon>Chlorobiota</taxon>
        <taxon>Chlorobiia</taxon>
        <taxon>Chlorobiales</taxon>
        <taxon>Chlorobiaceae</taxon>
        <taxon>Chlorobium/Pelodictyon group</taxon>
        <taxon>Pelodictyon</taxon>
    </lineage>
</organism>
<sequence>MAKNSLKPSNPYNSEPETPQPRPKLPMIYYVVVIALLIGLQLAFFWSGSSREIPYSTFRTFITENKVESVRIAPEKIYVTLKPGVDSGLPKQEEGNDTTRKLLPGAKTPENEVTVNPVRDESLTALLETHGVRYEGSPGTTWISELIQWVLPFALLFGLYFFIFRRMGAGGPGAQFMNIGKNKAALYENLDEHTRITFKDVAGLDEAKAEVMEVVDFLKDPKKYTRLGGKLPKGVLLVGPPGTGKTLLAKAVAGEADVPFFSISGSDFVEMFVGVGAARVRDLFRQAKEKAPCIIFIDEIDAVGRSRGKGAMMGGNDERENTLNQLLVEMDGFATDKGVILMAATNRPDVLDPALLRPGRFDRQIMVDKPDLKGRMDTFRVHTKNMSLSPDVNLKALASQTPGFAGAEIANAANEAALLASRRNKESIEMKDFEDAIERVVAGLEKKNKVINPKEKRIVAYHEAGHAIVSWMMPENDPVQKISIVPRGMSALGYTMNIPLEDRYLMTKRELFARICGLLGGRIAEESVFGEISTGAQNDLEKITGIAYNMVMVYGMSDKIGNLSYYESNNPYYGAPGVEKKFGGETARLIDEEVKAIVESAADTVRTMLKEHRSKLEALARELLTKEMLQYCQIEEILGKRPGGQEEDSGEVDCSKKSAENGMVAHEPETTADAESTEKVGLSATELAELEAAAERLRQSRNVSDN</sequence>
<dbReference type="EC" id="3.4.24.-" evidence="1"/>
<dbReference type="EMBL" id="CP000096">
    <property type="protein sequence ID" value="ABB22968.1"/>
    <property type="molecule type" value="Genomic_DNA"/>
</dbReference>
<dbReference type="RefSeq" id="WP_011356844.1">
    <property type="nucleotide sequence ID" value="NC_007512.1"/>
</dbReference>
<dbReference type="SMR" id="Q3B6R3"/>
<dbReference type="STRING" id="319225.Plut_0078"/>
<dbReference type="KEGG" id="plt:Plut_0078"/>
<dbReference type="eggNOG" id="COG0465">
    <property type="taxonomic scope" value="Bacteria"/>
</dbReference>
<dbReference type="HOGENOM" id="CLU_000688_16_2_10"/>
<dbReference type="OrthoDB" id="9809379at2"/>
<dbReference type="Proteomes" id="UP000002709">
    <property type="component" value="Chromosome"/>
</dbReference>
<dbReference type="GO" id="GO:0005886">
    <property type="term" value="C:plasma membrane"/>
    <property type="evidence" value="ECO:0007669"/>
    <property type="project" value="UniProtKB-SubCell"/>
</dbReference>
<dbReference type="GO" id="GO:0005524">
    <property type="term" value="F:ATP binding"/>
    <property type="evidence" value="ECO:0007669"/>
    <property type="project" value="UniProtKB-UniRule"/>
</dbReference>
<dbReference type="GO" id="GO:0016887">
    <property type="term" value="F:ATP hydrolysis activity"/>
    <property type="evidence" value="ECO:0007669"/>
    <property type="project" value="UniProtKB-UniRule"/>
</dbReference>
<dbReference type="GO" id="GO:0004176">
    <property type="term" value="F:ATP-dependent peptidase activity"/>
    <property type="evidence" value="ECO:0007669"/>
    <property type="project" value="InterPro"/>
</dbReference>
<dbReference type="GO" id="GO:0004222">
    <property type="term" value="F:metalloendopeptidase activity"/>
    <property type="evidence" value="ECO:0007669"/>
    <property type="project" value="InterPro"/>
</dbReference>
<dbReference type="GO" id="GO:0008270">
    <property type="term" value="F:zinc ion binding"/>
    <property type="evidence" value="ECO:0007669"/>
    <property type="project" value="UniProtKB-UniRule"/>
</dbReference>
<dbReference type="GO" id="GO:0030163">
    <property type="term" value="P:protein catabolic process"/>
    <property type="evidence" value="ECO:0007669"/>
    <property type="project" value="UniProtKB-UniRule"/>
</dbReference>
<dbReference type="GO" id="GO:0006508">
    <property type="term" value="P:proteolysis"/>
    <property type="evidence" value="ECO:0007669"/>
    <property type="project" value="UniProtKB-KW"/>
</dbReference>
<dbReference type="CDD" id="cd19501">
    <property type="entry name" value="RecA-like_FtsH"/>
    <property type="match status" value="1"/>
</dbReference>
<dbReference type="FunFam" id="1.10.8.60:FF:000001">
    <property type="entry name" value="ATP-dependent zinc metalloprotease FtsH"/>
    <property type="match status" value="1"/>
</dbReference>
<dbReference type="FunFam" id="1.20.58.760:FF:000001">
    <property type="entry name" value="ATP-dependent zinc metalloprotease FtsH"/>
    <property type="match status" value="1"/>
</dbReference>
<dbReference type="FunFam" id="3.40.50.300:FF:000001">
    <property type="entry name" value="ATP-dependent zinc metalloprotease FtsH"/>
    <property type="match status" value="1"/>
</dbReference>
<dbReference type="Gene3D" id="1.10.8.60">
    <property type="match status" value="1"/>
</dbReference>
<dbReference type="Gene3D" id="3.30.720.210">
    <property type="match status" value="1"/>
</dbReference>
<dbReference type="Gene3D" id="3.40.50.300">
    <property type="entry name" value="P-loop containing nucleotide triphosphate hydrolases"/>
    <property type="match status" value="1"/>
</dbReference>
<dbReference type="Gene3D" id="1.20.58.760">
    <property type="entry name" value="Peptidase M41"/>
    <property type="match status" value="1"/>
</dbReference>
<dbReference type="HAMAP" id="MF_01458">
    <property type="entry name" value="FtsH"/>
    <property type="match status" value="1"/>
</dbReference>
<dbReference type="InterPro" id="IPR003593">
    <property type="entry name" value="AAA+_ATPase"/>
</dbReference>
<dbReference type="InterPro" id="IPR041569">
    <property type="entry name" value="AAA_lid_3"/>
</dbReference>
<dbReference type="InterPro" id="IPR050928">
    <property type="entry name" value="ATP-dep_Zn_Metalloprotease"/>
</dbReference>
<dbReference type="InterPro" id="IPR003959">
    <property type="entry name" value="ATPase_AAA_core"/>
</dbReference>
<dbReference type="InterPro" id="IPR003960">
    <property type="entry name" value="ATPase_AAA_CS"/>
</dbReference>
<dbReference type="InterPro" id="IPR005936">
    <property type="entry name" value="FtsH"/>
</dbReference>
<dbReference type="InterPro" id="IPR027417">
    <property type="entry name" value="P-loop_NTPase"/>
</dbReference>
<dbReference type="InterPro" id="IPR011546">
    <property type="entry name" value="Pept_M41_FtsH_extracell"/>
</dbReference>
<dbReference type="InterPro" id="IPR000642">
    <property type="entry name" value="Peptidase_M41"/>
</dbReference>
<dbReference type="InterPro" id="IPR037219">
    <property type="entry name" value="Peptidase_M41-like"/>
</dbReference>
<dbReference type="NCBIfam" id="TIGR01241">
    <property type="entry name" value="FtsH_fam"/>
    <property type="match status" value="1"/>
</dbReference>
<dbReference type="PANTHER" id="PTHR43655:SF2">
    <property type="entry name" value="AFG3 LIKE MATRIX AAA PEPTIDASE SUBUNIT 2, ISOFORM A"/>
    <property type="match status" value="1"/>
</dbReference>
<dbReference type="PANTHER" id="PTHR43655">
    <property type="entry name" value="ATP-DEPENDENT PROTEASE"/>
    <property type="match status" value="1"/>
</dbReference>
<dbReference type="Pfam" id="PF00004">
    <property type="entry name" value="AAA"/>
    <property type="match status" value="1"/>
</dbReference>
<dbReference type="Pfam" id="PF17862">
    <property type="entry name" value="AAA_lid_3"/>
    <property type="match status" value="1"/>
</dbReference>
<dbReference type="Pfam" id="PF06480">
    <property type="entry name" value="FtsH_ext"/>
    <property type="match status" value="1"/>
</dbReference>
<dbReference type="Pfam" id="PF01434">
    <property type="entry name" value="Peptidase_M41"/>
    <property type="match status" value="1"/>
</dbReference>
<dbReference type="SMART" id="SM00382">
    <property type="entry name" value="AAA"/>
    <property type="match status" value="1"/>
</dbReference>
<dbReference type="SUPFAM" id="SSF140990">
    <property type="entry name" value="FtsH protease domain-like"/>
    <property type="match status" value="1"/>
</dbReference>
<dbReference type="SUPFAM" id="SSF52540">
    <property type="entry name" value="P-loop containing nucleoside triphosphate hydrolases"/>
    <property type="match status" value="1"/>
</dbReference>
<dbReference type="PROSITE" id="PS00674">
    <property type="entry name" value="AAA"/>
    <property type="match status" value="1"/>
</dbReference>
<feature type="chain" id="PRO_0000400369" description="ATP-dependent zinc metalloprotease FtsH">
    <location>
        <begin position="1"/>
        <end position="706"/>
    </location>
</feature>
<feature type="topological domain" description="Cytoplasmic" evidence="1">
    <location>
        <begin position="1"/>
        <end position="24"/>
    </location>
</feature>
<feature type="transmembrane region" description="Helical" evidence="1">
    <location>
        <begin position="25"/>
        <end position="45"/>
    </location>
</feature>
<feature type="topological domain" description="Periplasmic" evidence="1">
    <location>
        <begin position="46"/>
        <end position="142"/>
    </location>
</feature>
<feature type="transmembrane region" description="Helical" evidence="1">
    <location>
        <begin position="143"/>
        <end position="163"/>
    </location>
</feature>
<feature type="topological domain" description="Cytoplasmic" evidence="1">
    <location>
        <begin position="164"/>
        <end position="706"/>
    </location>
</feature>
<feature type="region of interest" description="Disordered" evidence="2">
    <location>
        <begin position="1"/>
        <end position="20"/>
    </location>
</feature>
<feature type="region of interest" description="Disordered" evidence="2">
    <location>
        <begin position="88"/>
        <end position="111"/>
    </location>
</feature>
<feature type="region of interest" description="Disordered" evidence="2">
    <location>
        <begin position="641"/>
        <end position="681"/>
    </location>
</feature>
<feature type="compositionally biased region" description="Polar residues" evidence="2">
    <location>
        <begin position="1"/>
        <end position="17"/>
    </location>
</feature>
<feature type="compositionally biased region" description="Basic and acidic residues" evidence="2">
    <location>
        <begin position="91"/>
        <end position="100"/>
    </location>
</feature>
<feature type="active site" evidence="1">
    <location>
        <position position="463"/>
    </location>
</feature>
<feature type="binding site" evidence="1">
    <location>
        <begin position="239"/>
        <end position="246"/>
    </location>
    <ligand>
        <name>ATP</name>
        <dbReference type="ChEBI" id="CHEBI:30616"/>
    </ligand>
</feature>
<feature type="binding site" evidence="1">
    <location>
        <position position="462"/>
    </location>
    <ligand>
        <name>Zn(2+)</name>
        <dbReference type="ChEBI" id="CHEBI:29105"/>
        <note>catalytic</note>
    </ligand>
</feature>
<feature type="binding site" evidence="1">
    <location>
        <position position="466"/>
    </location>
    <ligand>
        <name>Zn(2+)</name>
        <dbReference type="ChEBI" id="CHEBI:29105"/>
        <note>catalytic</note>
    </ligand>
</feature>
<feature type="binding site" evidence="1">
    <location>
        <position position="539"/>
    </location>
    <ligand>
        <name>Zn(2+)</name>
        <dbReference type="ChEBI" id="CHEBI:29105"/>
        <note>catalytic</note>
    </ligand>
</feature>
<evidence type="ECO:0000255" key="1">
    <source>
        <dbReference type="HAMAP-Rule" id="MF_01458"/>
    </source>
</evidence>
<evidence type="ECO:0000256" key="2">
    <source>
        <dbReference type="SAM" id="MobiDB-lite"/>
    </source>
</evidence>
<keyword id="KW-0067">ATP-binding</keyword>
<keyword id="KW-0997">Cell inner membrane</keyword>
<keyword id="KW-1003">Cell membrane</keyword>
<keyword id="KW-0378">Hydrolase</keyword>
<keyword id="KW-0472">Membrane</keyword>
<keyword id="KW-0479">Metal-binding</keyword>
<keyword id="KW-0482">Metalloprotease</keyword>
<keyword id="KW-0547">Nucleotide-binding</keyword>
<keyword id="KW-0645">Protease</keyword>
<keyword id="KW-1185">Reference proteome</keyword>
<keyword id="KW-0812">Transmembrane</keyword>
<keyword id="KW-1133">Transmembrane helix</keyword>
<keyword id="KW-0862">Zinc</keyword>
<proteinExistence type="inferred from homology"/>